<organism>
    <name type="scientific">Acinetobacter baumannii (strain ATCC 17978 / DSM 105126 / CIP 53.77 / LMG 1025 / NCDC KC755 / 5377)</name>
    <dbReference type="NCBI Taxonomy" id="400667"/>
    <lineage>
        <taxon>Bacteria</taxon>
        <taxon>Pseudomonadati</taxon>
        <taxon>Pseudomonadota</taxon>
        <taxon>Gammaproteobacteria</taxon>
        <taxon>Moraxellales</taxon>
        <taxon>Moraxellaceae</taxon>
        <taxon>Acinetobacter</taxon>
        <taxon>Acinetobacter calcoaceticus/baumannii complex</taxon>
    </lineage>
</organism>
<comment type="function">
    <text evidence="1">DNA-dependent RNA polymerase catalyzes the transcription of DNA into RNA using the four ribonucleoside triphosphates as substrates.</text>
</comment>
<comment type="catalytic activity">
    <reaction evidence="1">
        <text>RNA(n) + a ribonucleoside 5'-triphosphate = RNA(n+1) + diphosphate</text>
        <dbReference type="Rhea" id="RHEA:21248"/>
        <dbReference type="Rhea" id="RHEA-COMP:14527"/>
        <dbReference type="Rhea" id="RHEA-COMP:17342"/>
        <dbReference type="ChEBI" id="CHEBI:33019"/>
        <dbReference type="ChEBI" id="CHEBI:61557"/>
        <dbReference type="ChEBI" id="CHEBI:140395"/>
        <dbReference type="EC" id="2.7.7.6"/>
    </reaction>
</comment>
<comment type="subunit">
    <text evidence="1">Homodimer. The RNAP catalytic core consists of 2 alpha, 1 beta, 1 beta' and 1 omega subunit. When a sigma factor is associated with the core the holoenzyme is formed, which can initiate transcription.</text>
</comment>
<comment type="domain">
    <text evidence="1">The N-terminal domain is essential for RNAP assembly and basal transcription, whereas the C-terminal domain is involved in interaction with transcriptional regulators and with upstream promoter elements.</text>
</comment>
<comment type="similarity">
    <text evidence="1">Belongs to the RNA polymerase alpha chain family.</text>
</comment>
<reference key="1">
    <citation type="journal article" date="2007" name="Genes Dev.">
        <title>New insights into Acinetobacter baumannii pathogenesis revealed by high-density pyrosequencing and transposon mutagenesis.</title>
        <authorList>
            <person name="Smith M.G."/>
            <person name="Gianoulis T.A."/>
            <person name="Pukatzki S."/>
            <person name="Mekalanos J.J."/>
            <person name="Ornston L.N."/>
            <person name="Gerstein M."/>
            <person name="Snyder M."/>
        </authorList>
    </citation>
    <scope>NUCLEOTIDE SEQUENCE [LARGE SCALE GENOMIC DNA]</scope>
    <source>
        <strain>ATCC 17978 / DSM 105126 / CIP 53.77 / LMG 1025 / NCDC KC755 / 5377</strain>
    </source>
</reference>
<keyword id="KW-0240">DNA-directed RNA polymerase</keyword>
<keyword id="KW-0548">Nucleotidyltransferase</keyword>
<keyword id="KW-0804">Transcription</keyword>
<keyword id="KW-0808">Transferase</keyword>
<gene>
    <name evidence="1" type="primary">rpoA</name>
    <name type="ordered locus">A1S_3056</name>
</gene>
<evidence type="ECO:0000255" key="1">
    <source>
        <dbReference type="HAMAP-Rule" id="MF_00059"/>
    </source>
</evidence>
<dbReference type="EC" id="2.7.7.6" evidence="1"/>
<dbReference type="EMBL" id="CP000521">
    <property type="protein sequence ID" value="ABO13453.2"/>
    <property type="molecule type" value="Genomic_DNA"/>
</dbReference>
<dbReference type="RefSeq" id="WP_000198631.1">
    <property type="nucleotide sequence ID" value="NZ_CP053098.1"/>
</dbReference>
<dbReference type="SMR" id="A3M959"/>
<dbReference type="GeneID" id="92895292"/>
<dbReference type="KEGG" id="acb:A1S_3056"/>
<dbReference type="HOGENOM" id="CLU_053084_0_0_6"/>
<dbReference type="GO" id="GO:0005737">
    <property type="term" value="C:cytoplasm"/>
    <property type="evidence" value="ECO:0007669"/>
    <property type="project" value="UniProtKB-ARBA"/>
</dbReference>
<dbReference type="GO" id="GO:0000428">
    <property type="term" value="C:DNA-directed RNA polymerase complex"/>
    <property type="evidence" value="ECO:0007669"/>
    <property type="project" value="UniProtKB-KW"/>
</dbReference>
<dbReference type="GO" id="GO:0003677">
    <property type="term" value="F:DNA binding"/>
    <property type="evidence" value="ECO:0007669"/>
    <property type="project" value="UniProtKB-UniRule"/>
</dbReference>
<dbReference type="GO" id="GO:0003899">
    <property type="term" value="F:DNA-directed RNA polymerase activity"/>
    <property type="evidence" value="ECO:0007669"/>
    <property type="project" value="UniProtKB-UniRule"/>
</dbReference>
<dbReference type="GO" id="GO:0046983">
    <property type="term" value="F:protein dimerization activity"/>
    <property type="evidence" value="ECO:0007669"/>
    <property type="project" value="InterPro"/>
</dbReference>
<dbReference type="GO" id="GO:0006351">
    <property type="term" value="P:DNA-templated transcription"/>
    <property type="evidence" value="ECO:0007669"/>
    <property type="project" value="UniProtKB-UniRule"/>
</dbReference>
<dbReference type="CDD" id="cd06928">
    <property type="entry name" value="RNAP_alpha_NTD"/>
    <property type="match status" value="1"/>
</dbReference>
<dbReference type="FunFam" id="1.10.150.20:FF:000001">
    <property type="entry name" value="DNA-directed RNA polymerase subunit alpha"/>
    <property type="match status" value="1"/>
</dbReference>
<dbReference type="FunFam" id="2.170.120.12:FF:000001">
    <property type="entry name" value="DNA-directed RNA polymerase subunit alpha"/>
    <property type="match status" value="1"/>
</dbReference>
<dbReference type="Gene3D" id="1.10.150.20">
    <property type="entry name" value="5' to 3' exonuclease, C-terminal subdomain"/>
    <property type="match status" value="1"/>
</dbReference>
<dbReference type="Gene3D" id="2.170.120.12">
    <property type="entry name" value="DNA-directed RNA polymerase, insert domain"/>
    <property type="match status" value="1"/>
</dbReference>
<dbReference type="Gene3D" id="3.30.1360.10">
    <property type="entry name" value="RNA polymerase, RBP11-like subunit"/>
    <property type="match status" value="1"/>
</dbReference>
<dbReference type="HAMAP" id="MF_00059">
    <property type="entry name" value="RNApol_bact_RpoA"/>
    <property type="match status" value="1"/>
</dbReference>
<dbReference type="InterPro" id="IPR011262">
    <property type="entry name" value="DNA-dir_RNA_pol_insert"/>
</dbReference>
<dbReference type="InterPro" id="IPR011263">
    <property type="entry name" value="DNA-dir_RNA_pol_RpoA/D/Rpb3"/>
</dbReference>
<dbReference type="InterPro" id="IPR011773">
    <property type="entry name" value="DNA-dir_RpoA"/>
</dbReference>
<dbReference type="InterPro" id="IPR036603">
    <property type="entry name" value="RBP11-like"/>
</dbReference>
<dbReference type="InterPro" id="IPR011260">
    <property type="entry name" value="RNAP_asu_C"/>
</dbReference>
<dbReference type="InterPro" id="IPR036643">
    <property type="entry name" value="RNApol_insert_sf"/>
</dbReference>
<dbReference type="NCBIfam" id="NF003513">
    <property type="entry name" value="PRK05182.1-2"/>
    <property type="match status" value="1"/>
</dbReference>
<dbReference type="NCBIfam" id="NF003519">
    <property type="entry name" value="PRK05182.2-5"/>
    <property type="match status" value="1"/>
</dbReference>
<dbReference type="NCBIfam" id="TIGR02027">
    <property type="entry name" value="rpoA"/>
    <property type="match status" value="1"/>
</dbReference>
<dbReference type="Pfam" id="PF01000">
    <property type="entry name" value="RNA_pol_A_bac"/>
    <property type="match status" value="1"/>
</dbReference>
<dbReference type="Pfam" id="PF03118">
    <property type="entry name" value="RNA_pol_A_CTD"/>
    <property type="match status" value="1"/>
</dbReference>
<dbReference type="Pfam" id="PF01193">
    <property type="entry name" value="RNA_pol_L"/>
    <property type="match status" value="1"/>
</dbReference>
<dbReference type="SMART" id="SM00662">
    <property type="entry name" value="RPOLD"/>
    <property type="match status" value="1"/>
</dbReference>
<dbReference type="SUPFAM" id="SSF47789">
    <property type="entry name" value="C-terminal domain of RNA polymerase alpha subunit"/>
    <property type="match status" value="1"/>
</dbReference>
<dbReference type="SUPFAM" id="SSF56553">
    <property type="entry name" value="Insert subdomain of RNA polymerase alpha subunit"/>
    <property type="match status" value="1"/>
</dbReference>
<dbReference type="SUPFAM" id="SSF55257">
    <property type="entry name" value="RBP11-like subunits of RNA polymerase"/>
    <property type="match status" value="1"/>
</dbReference>
<feature type="chain" id="PRO_0000296775" description="DNA-directed RNA polymerase subunit alpha">
    <location>
        <begin position="1"/>
        <end position="335"/>
    </location>
</feature>
<feature type="region of interest" description="Alpha N-terminal domain (alpha-NTD)" evidence="1">
    <location>
        <begin position="26"/>
        <end position="233"/>
    </location>
</feature>
<feature type="region of interest" description="Alpha C-terminal domain (alpha-CTD)" evidence="1">
    <location>
        <begin position="247"/>
        <end position="335"/>
    </location>
</feature>
<protein>
    <recommendedName>
        <fullName evidence="1">DNA-directed RNA polymerase subunit alpha</fullName>
        <shortName evidence="1">RNAP subunit alpha</shortName>
        <ecNumber evidence="1">2.7.7.6</ecNumber>
    </recommendedName>
    <alternativeName>
        <fullName evidence="1">RNA polymerase subunit alpha</fullName>
    </alternativeName>
    <alternativeName>
        <fullName evidence="1">Transcriptase subunit alpha</fullName>
    </alternativeName>
</protein>
<name>RPOA_ACIBT</name>
<proteinExistence type="inferred from homology"/>
<accession>A3M959</accession>
<sequence>MTRTANEFLTPQAIKVEAVSGTSAKVILEPLERGFGHTLGNALRRILLSSLPGAAVVEVEIEGVEHEYSTLEGLQQDIVELLLNLKGLSIKLFDQNEAYLTLEKQGPGDITAADLRLPHNVEVVNPEHLIGTLSATGSLKMRLKVSQGRGYETSDSRFPEGETRPVGRLQLDASYSPIKRVSYTVENARVEQRTDLDKLVIDLETNGTVDPEEAIRKAATILQQQIAIFVDLQKDQTPVAQEPREEVDPILLRPVDDLELTVRSANCLKAENIYYIGDLVQRTEVELLKTPNLGKKSLTEIKDVLASKGLQLGMRLENWPPASLRMDDRFAYRSR</sequence>